<keyword id="KW-0002">3D-structure</keyword>
<keyword id="KW-0249">Electron transport</keyword>
<keyword id="KW-0472">Membrane</keyword>
<keyword id="KW-0496">Mitochondrion</keyword>
<keyword id="KW-0999">Mitochondrion inner membrane</keyword>
<keyword id="KW-1185">Reference proteome</keyword>
<keyword id="KW-0679">Respiratory chain</keyword>
<keyword id="KW-0812">Transmembrane</keyword>
<keyword id="KW-1133">Transmembrane helix</keyword>
<keyword id="KW-0813">Transport</keyword>
<accession>Q9D8B4</accession>
<feature type="chain" id="PRO_0000118842" description="NADH dehydrogenase [ubiquinone] 1 alpha subcomplex subunit 11">
    <location>
        <begin position="1"/>
        <end position="141"/>
    </location>
</feature>
<feature type="transmembrane region" description="Helical" evidence="2">
    <location>
        <begin position="21"/>
        <end position="43"/>
    </location>
</feature>
<feature type="transmembrane region" description="Helical" evidence="2">
    <location>
        <begin position="58"/>
        <end position="80"/>
    </location>
</feature>
<name>NDUAB_MOUSE</name>
<organism>
    <name type="scientific">Mus musculus</name>
    <name type="common">Mouse</name>
    <dbReference type="NCBI Taxonomy" id="10090"/>
    <lineage>
        <taxon>Eukaryota</taxon>
        <taxon>Metazoa</taxon>
        <taxon>Chordata</taxon>
        <taxon>Craniata</taxon>
        <taxon>Vertebrata</taxon>
        <taxon>Euteleostomi</taxon>
        <taxon>Mammalia</taxon>
        <taxon>Eutheria</taxon>
        <taxon>Euarchontoglires</taxon>
        <taxon>Glires</taxon>
        <taxon>Rodentia</taxon>
        <taxon>Myomorpha</taxon>
        <taxon>Muroidea</taxon>
        <taxon>Muridae</taxon>
        <taxon>Murinae</taxon>
        <taxon>Mus</taxon>
        <taxon>Mus</taxon>
    </lineage>
</organism>
<dbReference type="EMBL" id="AK008201">
    <property type="protein sequence ID" value="BAB25529.1"/>
    <property type="status" value="ALT_INIT"/>
    <property type="molecule type" value="mRNA"/>
</dbReference>
<dbReference type="PDB" id="7PSA">
    <property type="method" value="EM"/>
    <property type="resolution" value="3.40 A"/>
    <property type="chains" value="Y=1-141"/>
</dbReference>
<dbReference type="PDB" id="8PW5">
    <property type="method" value="EM"/>
    <property type="resolution" value="3.60 A"/>
    <property type="chains" value="Y1=1-141"/>
</dbReference>
<dbReference type="PDB" id="8PW6">
    <property type="method" value="EM"/>
    <property type="resolution" value="3.30 A"/>
    <property type="chains" value="Y1=1-141"/>
</dbReference>
<dbReference type="PDB" id="8PW7">
    <property type="method" value="EM"/>
    <property type="resolution" value="3.50 A"/>
    <property type="chains" value="Y1=1-141"/>
</dbReference>
<dbReference type="PDBsum" id="7PSA"/>
<dbReference type="PDBsum" id="8PW5"/>
<dbReference type="PDBsum" id="8PW6"/>
<dbReference type="PDBsum" id="8PW7"/>
<dbReference type="EMDB" id="EMD-13611"/>
<dbReference type="SMR" id="Q9D8B4"/>
<dbReference type="ComplexPortal" id="CPX-266">
    <property type="entry name" value="Mitochondrial respiratory chain complex I"/>
</dbReference>
<dbReference type="CORUM" id="Q9D8B4"/>
<dbReference type="FunCoup" id="Q9D8B4">
    <property type="interactions" value="938"/>
</dbReference>
<dbReference type="IntAct" id="Q9D8B4">
    <property type="interactions" value="2"/>
</dbReference>
<dbReference type="STRING" id="10090.ENSMUSP00000002452"/>
<dbReference type="iPTMnet" id="Q9D8B4"/>
<dbReference type="PhosphoSitePlus" id="Q9D8B4"/>
<dbReference type="SwissPalm" id="Q9D8B4"/>
<dbReference type="jPOST" id="Q9D8B4"/>
<dbReference type="PaxDb" id="10090-ENSMUSP00000002452"/>
<dbReference type="PeptideAtlas" id="Q9D8B4"/>
<dbReference type="ProteomicsDB" id="293536"/>
<dbReference type="Pumba" id="Q9D8B4"/>
<dbReference type="AGR" id="MGI:1917125"/>
<dbReference type="MGI" id="MGI:1917125">
    <property type="gene designation" value="Ndufa11"/>
</dbReference>
<dbReference type="eggNOG" id="ENOG502S6F6">
    <property type="taxonomic scope" value="Eukaryota"/>
</dbReference>
<dbReference type="InParanoid" id="Q9D8B4"/>
<dbReference type="PhylomeDB" id="Q9D8B4"/>
<dbReference type="Reactome" id="R-MMU-611105">
    <property type="pathway name" value="Respiratory electron transport"/>
</dbReference>
<dbReference type="Reactome" id="R-MMU-6799198">
    <property type="pathway name" value="Complex I biogenesis"/>
</dbReference>
<dbReference type="ChiTaRS" id="Ndufa11">
    <property type="organism name" value="mouse"/>
</dbReference>
<dbReference type="PRO" id="PR:Q9D8B4"/>
<dbReference type="Proteomes" id="UP000000589">
    <property type="component" value="Unplaced"/>
</dbReference>
<dbReference type="RNAct" id="Q9D8B4">
    <property type="molecule type" value="protein"/>
</dbReference>
<dbReference type="GO" id="GO:0005743">
    <property type="term" value="C:mitochondrial inner membrane"/>
    <property type="evidence" value="ECO:0000266"/>
    <property type="project" value="ComplexPortal"/>
</dbReference>
<dbReference type="GO" id="GO:0005739">
    <property type="term" value="C:mitochondrion"/>
    <property type="evidence" value="ECO:0000314"/>
    <property type="project" value="UniProtKB"/>
</dbReference>
<dbReference type="GO" id="GO:0045271">
    <property type="term" value="C:respiratory chain complex I"/>
    <property type="evidence" value="ECO:0000250"/>
    <property type="project" value="UniProtKB"/>
</dbReference>
<dbReference type="GO" id="GO:0009060">
    <property type="term" value="P:aerobic respiration"/>
    <property type="evidence" value="ECO:0000303"/>
    <property type="project" value="ComplexPortal"/>
</dbReference>
<dbReference type="GO" id="GO:0006120">
    <property type="term" value="P:mitochondrial electron transport, NADH to ubiquinone"/>
    <property type="evidence" value="ECO:0007669"/>
    <property type="project" value="InterPro"/>
</dbReference>
<dbReference type="GO" id="GO:0042776">
    <property type="term" value="P:proton motive force-driven mitochondrial ATP synthesis"/>
    <property type="evidence" value="ECO:0000303"/>
    <property type="project" value="ComplexPortal"/>
</dbReference>
<dbReference type="InterPro" id="IPR039205">
    <property type="entry name" value="NDUFA11"/>
</dbReference>
<dbReference type="PANTHER" id="PTHR21382:SF1">
    <property type="entry name" value="NADH DEHYDROGENASE [UBIQUINONE] 1 ALPHA SUBCOMPLEX SUBUNIT 11"/>
    <property type="match status" value="1"/>
</dbReference>
<dbReference type="PANTHER" id="PTHR21382">
    <property type="entry name" value="NADH-UBIQUINONE OXIDOREDUCTASE SUBUNIT"/>
    <property type="match status" value="1"/>
</dbReference>
<dbReference type="Pfam" id="PF02466">
    <property type="entry name" value="Tim17"/>
    <property type="match status" value="1"/>
</dbReference>
<gene>
    <name type="primary">Ndufa11</name>
</gene>
<reference key="1">
    <citation type="journal article" date="2005" name="Science">
        <title>The transcriptional landscape of the mammalian genome.</title>
        <authorList>
            <person name="Carninci P."/>
            <person name="Kasukawa T."/>
            <person name="Katayama S."/>
            <person name="Gough J."/>
            <person name="Frith M.C."/>
            <person name="Maeda N."/>
            <person name="Oyama R."/>
            <person name="Ravasi T."/>
            <person name="Lenhard B."/>
            <person name="Wells C."/>
            <person name="Kodzius R."/>
            <person name="Shimokawa K."/>
            <person name="Bajic V.B."/>
            <person name="Brenner S.E."/>
            <person name="Batalov S."/>
            <person name="Forrest A.R."/>
            <person name="Zavolan M."/>
            <person name="Davis M.J."/>
            <person name="Wilming L.G."/>
            <person name="Aidinis V."/>
            <person name="Allen J.E."/>
            <person name="Ambesi-Impiombato A."/>
            <person name="Apweiler R."/>
            <person name="Aturaliya R.N."/>
            <person name="Bailey T.L."/>
            <person name="Bansal M."/>
            <person name="Baxter L."/>
            <person name="Beisel K.W."/>
            <person name="Bersano T."/>
            <person name="Bono H."/>
            <person name="Chalk A.M."/>
            <person name="Chiu K.P."/>
            <person name="Choudhary V."/>
            <person name="Christoffels A."/>
            <person name="Clutterbuck D.R."/>
            <person name="Crowe M.L."/>
            <person name="Dalla E."/>
            <person name="Dalrymple B.P."/>
            <person name="de Bono B."/>
            <person name="Della Gatta G."/>
            <person name="di Bernardo D."/>
            <person name="Down T."/>
            <person name="Engstrom P."/>
            <person name="Fagiolini M."/>
            <person name="Faulkner G."/>
            <person name="Fletcher C.F."/>
            <person name="Fukushima T."/>
            <person name="Furuno M."/>
            <person name="Futaki S."/>
            <person name="Gariboldi M."/>
            <person name="Georgii-Hemming P."/>
            <person name="Gingeras T.R."/>
            <person name="Gojobori T."/>
            <person name="Green R.E."/>
            <person name="Gustincich S."/>
            <person name="Harbers M."/>
            <person name="Hayashi Y."/>
            <person name="Hensch T.K."/>
            <person name="Hirokawa N."/>
            <person name="Hill D."/>
            <person name="Huminiecki L."/>
            <person name="Iacono M."/>
            <person name="Ikeo K."/>
            <person name="Iwama A."/>
            <person name="Ishikawa T."/>
            <person name="Jakt M."/>
            <person name="Kanapin A."/>
            <person name="Katoh M."/>
            <person name="Kawasawa Y."/>
            <person name="Kelso J."/>
            <person name="Kitamura H."/>
            <person name="Kitano H."/>
            <person name="Kollias G."/>
            <person name="Krishnan S.P."/>
            <person name="Kruger A."/>
            <person name="Kummerfeld S.K."/>
            <person name="Kurochkin I.V."/>
            <person name="Lareau L.F."/>
            <person name="Lazarevic D."/>
            <person name="Lipovich L."/>
            <person name="Liu J."/>
            <person name="Liuni S."/>
            <person name="McWilliam S."/>
            <person name="Madan Babu M."/>
            <person name="Madera M."/>
            <person name="Marchionni L."/>
            <person name="Matsuda H."/>
            <person name="Matsuzawa S."/>
            <person name="Miki H."/>
            <person name="Mignone F."/>
            <person name="Miyake S."/>
            <person name="Morris K."/>
            <person name="Mottagui-Tabar S."/>
            <person name="Mulder N."/>
            <person name="Nakano N."/>
            <person name="Nakauchi H."/>
            <person name="Ng P."/>
            <person name="Nilsson R."/>
            <person name="Nishiguchi S."/>
            <person name="Nishikawa S."/>
            <person name="Nori F."/>
            <person name="Ohara O."/>
            <person name="Okazaki Y."/>
            <person name="Orlando V."/>
            <person name="Pang K.C."/>
            <person name="Pavan W.J."/>
            <person name="Pavesi G."/>
            <person name="Pesole G."/>
            <person name="Petrovsky N."/>
            <person name="Piazza S."/>
            <person name="Reed J."/>
            <person name="Reid J.F."/>
            <person name="Ring B.Z."/>
            <person name="Ringwald M."/>
            <person name="Rost B."/>
            <person name="Ruan Y."/>
            <person name="Salzberg S.L."/>
            <person name="Sandelin A."/>
            <person name="Schneider C."/>
            <person name="Schoenbach C."/>
            <person name="Sekiguchi K."/>
            <person name="Semple C.A."/>
            <person name="Seno S."/>
            <person name="Sessa L."/>
            <person name="Sheng Y."/>
            <person name="Shibata Y."/>
            <person name="Shimada H."/>
            <person name="Shimada K."/>
            <person name="Silva D."/>
            <person name="Sinclair B."/>
            <person name="Sperling S."/>
            <person name="Stupka E."/>
            <person name="Sugiura K."/>
            <person name="Sultana R."/>
            <person name="Takenaka Y."/>
            <person name="Taki K."/>
            <person name="Tammoja K."/>
            <person name="Tan S.L."/>
            <person name="Tang S."/>
            <person name="Taylor M.S."/>
            <person name="Tegner J."/>
            <person name="Teichmann S.A."/>
            <person name="Ueda H.R."/>
            <person name="van Nimwegen E."/>
            <person name="Verardo R."/>
            <person name="Wei C.L."/>
            <person name="Yagi K."/>
            <person name="Yamanishi H."/>
            <person name="Zabarovsky E."/>
            <person name="Zhu S."/>
            <person name="Zimmer A."/>
            <person name="Hide W."/>
            <person name="Bult C."/>
            <person name="Grimmond S.M."/>
            <person name="Teasdale R.D."/>
            <person name="Liu E.T."/>
            <person name="Brusic V."/>
            <person name="Quackenbush J."/>
            <person name="Wahlestedt C."/>
            <person name="Mattick J.S."/>
            <person name="Hume D.A."/>
            <person name="Kai C."/>
            <person name="Sasaki D."/>
            <person name="Tomaru Y."/>
            <person name="Fukuda S."/>
            <person name="Kanamori-Katayama M."/>
            <person name="Suzuki M."/>
            <person name="Aoki J."/>
            <person name="Arakawa T."/>
            <person name="Iida J."/>
            <person name="Imamura K."/>
            <person name="Itoh M."/>
            <person name="Kato T."/>
            <person name="Kawaji H."/>
            <person name="Kawagashira N."/>
            <person name="Kawashima T."/>
            <person name="Kojima M."/>
            <person name="Kondo S."/>
            <person name="Konno H."/>
            <person name="Nakano K."/>
            <person name="Ninomiya N."/>
            <person name="Nishio T."/>
            <person name="Okada M."/>
            <person name="Plessy C."/>
            <person name="Shibata K."/>
            <person name="Shiraki T."/>
            <person name="Suzuki S."/>
            <person name="Tagami M."/>
            <person name="Waki K."/>
            <person name="Watahiki A."/>
            <person name="Okamura-Oho Y."/>
            <person name="Suzuki H."/>
            <person name="Kawai J."/>
            <person name="Hayashizaki Y."/>
        </authorList>
    </citation>
    <scope>NUCLEOTIDE SEQUENCE [LARGE SCALE MRNA]</scope>
    <source>
        <strain>C57BL/6J</strain>
        <tissue>Small intestine</tissue>
    </source>
</reference>
<reference key="2">
    <citation type="journal article" date="2010" name="Cell">
        <title>A tissue-specific atlas of mouse protein phosphorylation and expression.</title>
        <authorList>
            <person name="Huttlin E.L."/>
            <person name="Jedrychowski M.P."/>
            <person name="Elias J.E."/>
            <person name="Goswami T."/>
            <person name="Rad R."/>
            <person name="Beausoleil S.A."/>
            <person name="Villen J."/>
            <person name="Haas W."/>
            <person name="Sowa M.E."/>
            <person name="Gygi S.P."/>
        </authorList>
    </citation>
    <scope>IDENTIFICATION BY MASS SPECTROMETRY [LARGE SCALE ANALYSIS]</scope>
    <source>
        <tissue>Brain</tissue>
        <tissue>Brown adipose tissue</tissue>
        <tissue>Heart</tissue>
        <tissue>Kidney</tissue>
        <tissue>Liver</tissue>
        <tissue>Lung</tissue>
        <tissue>Pancreas</tissue>
        <tissue>Spleen</tissue>
        <tissue>Testis</tissue>
    </source>
</reference>
<protein>
    <recommendedName>
        <fullName>NADH dehydrogenase [ubiquinone] 1 alpha subcomplex subunit 11</fullName>
    </recommendedName>
    <alternativeName>
        <fullName>Complex I-B14.7</fullName>
        <shortName>CI-B14.7</shortName>
    </alternativeName>
    <alternativeName>
        <fullName>NADH-ubiquinone oxidoreductase subunit B14.7</fullName>
    </alternativeName>
</protein>
<comment type="function">
    <text evidence="1">Accessory subunit of the mitochondrial membrane respiratory chain NADH dehydrogenase (Complex I), that is believed not to be involved in catalysis. Complex I functions in the transfer of electrons from NADH to the respiratory chain. The immediate electron acceptor for the enzyme is believed to be ubiquinone.</text>
</comment>
<comment type="subunit">
    <text evidence="1">Complex I is composed of 45 different subunits.</text>
</comment>
<comment type="subcellular location">
    <subcellularLocation>
        <location evidence="1">Mitochondrion inner membrane</location>
        <topology evidence="2">Multi-pass membrane protein</topology>
        <orientation evidence="1">Matrix side</orientation>
    </subcellularLocation>
</comment>
<comment type="similarity">
    <text evidence="3">Belongs to the complex I NDUFA11 subunit family.</text>
</comment>
<comment type="sequence caution" evidence="3">
    <conflict type="erroneous initiation">
        <sequence resource="EMBL-CDS" id="BAB25529"/>
    </conflict>
</comment>
<sequence>MVKRFFESYHEVPDGTQCHRKTYITTALGGICGIIGSAYRVSLNPADSTLEAVARVGRYTFTAAAIGAMFGLTTCVSAQVREKPDDPLNYFIGGCAGGLTLGARTHSYGTAAMGCVYMGTAAALFKIGKLEGWELFPTPKV</sequence>
<proteinExistence type="evidence at protein level"/>
<evidence type="ECO:0000250" key="1">
    <source>
        <dbReference type="UniProtKB" id="Q86Y39"/>
    </source>
</evidence>
<evidence type="ECO:0000255" key="2"/>
<evidence type="ECO:0000305" key="3"/>